<accession>Q54QM4</accession>
<name>DNLI3_DICDI</name>
<proteinExistence type="inferred from homology"/>
<sequence length="1175" mass="132048">MSEDKSGSFYSMYKLCGQLEKESSHSGKTQLIKSFCNVFKGDLYLLAKLMLCKEDKRVFRIKDKAMLKICSHIWDCDLDDMIEDLDNGDFTETCKKFYIEYGKYPEKSTLTLKEVDQVLDSLTVSGKFEDQVKIINKLLKRCTPFDFRLVCRIIDSDLKINTGAKFFLDAFHPQAYDAFKKANNLKGVIEKIQQHDFDNDNGDGDDGDGDDNDDDDGDGDSDSDKKKKKSSGGSGSDSGSKKKSKSFEVAIKLMTPIKPMLPKAVKTVEGVVKSSECFYAEIKYDGERIQIHKDGNQFSCYSRNLKPLMPWKVDEVKPYIPKSTKAQQMILDGEILLMDTKTSQPLPFGTLSAHKKNGFKDATVCVFLFDILYLNGKSLIHLPLKERREILEKNVMVVKNRIEFSEVTIVNGASEKSKLTALLNRVFKEKLEGLVIKDAMSEYEPGCRHWIKIKKDYIHGMADSADLIAVGGYYGSGSMGGLVTVFLMVCYDKQNKIYKTVVKASGGLDDNMIAKLQPKVTSTMTKISKEVSKIPYWLDCPKQYAPDFIVKDIKQAMIFEIESAEFTKSDHHTTGYSMRFPRILKIRHDKDYKTATTLEELVEIGKDIKIVPVGKGDNNSPTTTTTTTTTTTTTTSSKLIKKQQLSDDDDDNDKDSKQQQQEPSKLKFVSDDLLDPFNDKSDDESNKIFILNYVDNSGIWNEKGLSGAIGKKWPSIPKSFSQGDSNIIKSGEIRVEKVKDDSISTNKKVFICNLSCIIPPKSKKESYTFSLKEFKSAIKEAKGAINQKKASVHLAKPQFTSPSWSELDEVLTKELYNSGIKVFVHSISKSSPTTTSPTTTSPTTTSPKITSPSSSSSPSNKLSPLKRGRDEKLEHEIIKDIEPSLPIFEDVNAVIDSKTIDQVDVKRLINSIKTMGGRVSDKWQQVGIGKTTHLICNGMSDLYLHVDRLGGTIVLPNWVDQCFGSDKLLPLHEDYIYFNKKDHPDYSQSSSSSSMSIEEEKIVVTTTSDDPSEGNQQQQDKKVIKESKIIQSKDHSSTTTIDTKITITSTNNNNNGNDNNKTRKKQHLLSIFQECIIFLHDNVNDRETLKRYIIAYGGDISDSVNDKTTHLVASLPNNFSNVKPKDLFKSIINNNSKNNNNNNNNNNNGIIVNSLWLWDSINMSDLLDVKNYKLF</sequence>
<evidence type="ECO:0000250" key="1"/>
<evidence type="ECO:0000255" key="2"/>
<evidence type="ECO:0000255" key="3">
    <source>
        <dbReference type="PROSITE-ProRule" id="PRU00033"/>
    </source>
</evidence>
<evidence type="ECO:0000255" key="4">
    <source>
        <dbReference type="PROSITE-ProRule" id="PRU10135"/>
    </source>
</evidence>
<evidence type="ECO:0000256" key="5">
    <source>
        <dbReference type="SAM" id="MobiDB-lite"/>
    </source>
</evidence>
<evidence type="ECO:0000305" key="6"/>
<keyword id="KW-0067">ATP-binding</keyword>
<keyword id="KW-0131">Cell cycle</keyword>
<keyword id="KW-0132">Cell division</keyword>
<keyword id="KW-0227">DNA damage</keyword>
<keyword id="KW-0233">DNA recombination</keyword>
<keyword id="KW-0234">DNA repair</keyword>
<keyword id="KW-0235">DNA replication</keyword>
<keyword id="KW-0436">Ligase</keyword>
<keyword id="KW-0460">Magnesium</keyword>
<keyword id="KW-0479">Metal-binding</keyword>
<keyword id="KW-0547">Nucleotide-binding</keyword>
<keyword id="KW-0539">Nucleus</keyword>
<keyword id="KW-1185">Reference proteome</keyword>
<keyword id="KW-0677">Repeat</keyword>
<protein>
    <recommendedName>
        <fullName>DNA ligase 3</fullName>
        <ecNumber evidence="4">6.5.1.1</ecNumber>
    </recommendedName>
    <alternativeName>
        <fullName>DNA ligase III</fullName>
    </alternativeName>
    <alternativeName>
        <fullName>Polydeoxyribonucleotide synthase [ATP] 3</fullName>
    </alternativeName>
</protein>
<gene>
    <name type="primary">lig3</name>
    <name type="ORF">DDB_G0283857</name>
</gene>
<feature type="chain" id="PRO_0000351215" description="DNA ligase 3">
    <location>
        <begin position="1"/>
        <end position="1175"/>
    </location>
</feature>
<feature type="domain" description="BRCT 1" evidence="3">
    <location>
        <begin position="883"/>
        <end position="976"/>
    </location>
</feature>
<feature type="domain" description="BRCT 2" evidence="3">
    <location>
        <begin position="1067"/>
        <end position="1174"/>
    </location>
</feature>
<feature type="region of interest" description="Disordered" evidence="5">
    <location>
        <begin position="195"/>
        <end position="243"/>
    </location>
</feature>
<feature type="region of interest" description="Disordered" evidence="5">
    <location>
        <begin position="612"/>
        <end position="669"/>
    </location>
</feature>
<feature type="region of interest" description="Disordered" evidence="5">
    <location>
        <begin position="829"/>
        <end position="869"/>
    </location>
</feature>
<feature type="region of interest" description="Disordered" evidence="5">
    <location>
        <begin position="984"/>
        <end position="1036"/>
    </location>
</feature>
<feature type="compositionally biased region" description="Acidic residues" evidence="5">
    <location>
        <begin position="199"/>
        <end position="221"/>
    </location>
</feature>
<feature type="compositionally biased region" description="Low complexity" evidence="5">
    <location>
        <begin position="622"/>
        <end position="635"/>
    </location>
</feature>
<feature type="compositionally biased region" description="Low complexity" evidence="5">
    <location>
        <begin position="829"/>
        <end position="859"/>
    </location>
</feature>
<feature type="compositionally biased region" description="Low complexity" evidence="5">
    <location>
        <begin position="987"/>
        <end position="996"/>
    </location>
</feature>
<feature type="compositionally biased region" description="Polar residues" evidence="5">
    <location>
        <begin position="1004"/>
        <end position="1018"/>
    </location>
</feature>
<feature type="compositionally biased region" description="Basic and acidic residues" evidence="5">
    <location>
        <begin position="1019"/>
        <end position="1036"/>
    </location>
</feature>
<feature type="active site" description="N6-AMP-lysine intermediate" evidence="4">
    <location>
        <position position="283"/>
    </location>
</feature>
<feature type="binding site" evidence="1">
    <location>
        <position position="281"/>
    </location>
    <ligand>
        <name>ATP</name>
        <dbReference type="ChEBI" id="CHEBI:30616"/>
    </ligand>
</feature>
<feature type="binding site" evidence="1">
    <location>
        <position position="288"/>
    </location>
    <ligand>
        <name>ATP</name>
        <dbReference type="ChEBI" id="CHEBI:30616"/>
    </ligand>
</feature>
<feature type="binding site" evidence="1">
    <location>
        <position position="303"/>
    </location>
    <ligand>
        <name>ATP</name>
        <dbReference type="ChEBI" id="CHEBI:30616"/>
    </ligand>
</feature>
<feature type="binding site" evidence="2">
    <location>
        <position position="334"/>
    </location>
    <ligand>
        <name>Mg(2+)</name>
        <dbReference type="ChEBI" id="CHEBI:18420"/>
        <label>1</label>
    </ligand>
</feature>
<feature type="binding site" evidence="2">
    <location>
        <position position="432"/>
    </location>
    <ligand>
        <name>Mg(2+)</name>
        <dbReference type="ChEBI" id="CHEBI:18420"/>
        <label>2</label>
    </ligand>
</feature>
<feature type="binding site" evidence="1">
    <location>
        <position position="437"/>
    </location>
    <ligand>
        <name>ATP</name>
        <dbReference type="ChEBI" id="CHEBI:30616"/>
    </ligand>
</feature>
<feature type="binding site" evidence="1">
    <location>
        <position position="448"/>
    </location>
    <ligand>
        <name>ATP</name>
        <dbReference type="ChEBI" id="CHEBI:30616"/>
    </ligand>
</feature>
<feature type="binding site" evidence="1">
    <location>
        <position position="452"/>
    </location>
    <ligand>
        <name>ATP</name>
        <dbReference type="ChEBI" id="CHEBI:30616"/>
    </ligand>
</feature>
<dbReference type="EC" id="6.5.1.1" evidence="4"/>
<dbReference type="EMBL" id="AAFI02000057">
    <property type="protein sequence ID" value="EAL65543.1"/>
    <property type="molecule type" value="Genomic_DNA"/>
</dbReference>
<dbReference type="RefSeq" id="XP_638847.1">
    <property type="nucleotide sequence ID" value="XM_633755.1"/>
</dbReference>
<dbReference type="SMR" id="Q54QM4"/>
<dbReference type="FunCoup" id="Q54QM4">
    <property type="interactions" value="300"/>
</dbReference>
<dbReference type="STRING" id="44689.Q54QM4"/>
<dbReference type="PaxDb" id="44689-DDB0232266"/>
<dbReference type="EnsemblProtists" id="EAL65543">
    <property type="protein sequence ID" value="EAL65543"/>
    <property type="gene ID" value="DDB_G0283857"/>
</dbReference>
<dbReference type="GeneID" id="8624245"/>
<dbReference type="KEGG" id="ddi:DDB_G0283857"/>
<dbReference type="dictyBase" id="DDB_G0283857">
    <property type="gene designation" value="lig3"/>
</dbReference>
<dbReference type="VEuPathDB" id="AmoebaDB:DDB_G0283857"/>
<dbReference type="eggNOG" id="KOG4437">
    <property type="taxonomic scope" value="Eukaryota"/>
</dbReference>
<dbReference type="HOGENOM" id="CLU_273687_0_0_1"/>
<dbReference type="InParanoid" id="Q54QM4"/>
<dbReference type="OMA" id="GCRHWIK"/>
<dbReference type="PhylomeDB" id="Q54QM4"/>
<dbReference type="Reactome" id="R-DDI-110381">
    <property type="pathway name" value="Resolution of AP sites via the single-nucleotide replacement pathway"/>
</dbReference>
<dbReference type="Reactome" id="R-DDI-5649702">
    <property type="pathway name" value="APEX1-Independent Resolution of AP Sites via the Single Nucleotide Replacement Pathway"/>
</dbReference>
<dbReference type="Reactome" id="R-DDI-6782210">
    <property type="pathway name" value="Gap-filling DNA repair synthesis and ligation in TC-NER"/>
</dbReference>
<dbReference type="PRO" id="PR:Q54QM4"/>
<dbReference type="Proteomes" id="UP000002195">
    <property type="component" value="Chromosome 4"/>
</dbReference>
<dbReference type="GO" id="GO:0005634">
    <property type="term" value="C:nucleus"/>
    <property type="evidence" value="ECO:0000318"/>
    <property type="project" value="GO_Central"/>
</dbReference>
<dbReference type="GO" id="GO:0005524">
    <property type="term" value="F:ATP binding"/>
    <property type="evidence" value="ECO:0007669"/>
    <property type="project" value="UniProtKB-KW"/>
</dbReference>
<dbReference type="GO" id="GO:0003677">
    <property type="term" value="F:DNA binding"/>
    <property type="evidence" value="ECO:0007669"/>
    <property type="project" value="InterPro"/>
</dbReference>
<dbReference type="GO" id="GO:0003910">
    <property type="term" value="F:DNA ligase (ATP) activity"/>
    <property type="evidence" value="ECO:0000318"/>
    <property type="project" value="GO_Central"/>
</dbReference>
<dbReference type="GO" id="GO:0046872">
    <property type="term" value="F:metal ion binding"/>
    <property type="evidence" value="ECO:0007669"/>
    <property type="project" value="UniProtKB-KW"/>
</dbReference>
<dbReference type="GO" id="GO:0051301">
    <property type="term" value="P:cell division"/>
    <property type="evidence" value="ECO:0007669"/>
    <property type="project" value="UniProtKB-KW"/>
</dbReference>
<dbReference type="GO" id="GO:0071897">
    <property type="term" value="P:DNA biosynthetic process"/>
    <property type="evidence" value="ECO:0007669"/>
    <property type="project" value="InterPro"/>
</dbReference>
<dbReference type="GO" id="GO:0006310">
    <property type="term" value="P:DNA recombination"/>
    <property type="evidence" value="ECO:0007669"/>
    <property type="project" value="UniProtKB-KW"/>
</dbReference>
<dbReference type="GO" id="GO:0006281">
    <property type="term" value="P:DNA repair"/>
    <property type="evidence" value="ECO:0007669"/>
    <property type="project" value="UniProtKB-KW"/>
</dbReference>
<dbReference type="GO" id="GO:0006273">
    <property type="term" value="P:lagging strand elongation"/>
    <property type="evidence" value="ECO:0000318"/>
    <property type="project" value="GO_Central"/>
</dbReference>
<dbReference type="CDD" id="cd07902">
    <property type="entry name" value="Adenylation_DNA_ligase_III"/>
    <property type="match status" value="1"/>
</dbReference>
<dbReference type="CDD" id="cd00027">
    <property type="entry name" value="BRCT"/>
    <property type="match status" value="1"/>
</dbReference>
<dbReference type="CDD" id="cd07967">
    <property type="entry name" value="OBF_DNA_ligase_III"/>
    <property type="match status" value="1"/>
</dbReference>
<dbReference type="FunFam" id="3.30.470.30:FF:000003">
    <property type="entry name" value="DNA ligase"/>
    <property type="match status" value="1"/>
</dbReference>
<dbReference type="FunFam" id="3.40.50.10190:FF:000180">
    <property type="entry name" value="DNA ligase"/>
    <property type="match status" value="1"/>
</dbReference>
<dbReference type="FunFam" id="3.40.220.10:FF:000038">
    <property type="entry name" value="DNA ligase 3"/>
    <property type="match status" value="1"/>
</dbReference>
<dbReference type="FunFam" id="3.40.50.10190:FF:000171">
    <property type="entry name" value="DNA ligase 3"/>
    <property type="match status" value="1"/>
</dbReference>
<dbReference type="Gene3D" id="3.30.1490.70">
    <property type="match status" value="1"/>
</dbReference>
<dbReference type="Gene3D" id="3.40.50.10190">
    <property type="entry name" value="BRCT domain"/>
    <property type="match status" value="2"/>
</dbReference>
<dbReference type="Gene3D" id="1.10.3260.10">
    <property type="entry name" value="DNA ligase, ATP-dependent, N-terminal domain"/>
    <property type="match status" value="1"/>
</dbReference>
<dbReference type="Gene3D" id="3.30.470.30">
    <property type="entry name" value="DNA ligase/mRNA capping enzyme"/>
    <property type="match status" value="1"/>
</dbReference>
<dbReference type="Gene3D" id="3.40.220.10">
    <property type="entry name" value="Leucine Aminopeptidase, subunit E, domain 1"/>
    <property type="match status" value="1"/>
</dbReference>
<dbReference type="Gene3D" id="2.40.50.140">
    <property type="entry name" value="Nucleic acid-binding proteins"/>
    <property type="match status" value="1"/>
</dbReference>
<dbReference type="InterPro" id="IPR050191">
    <property type="entry name" value="ATP-dep_DNA_ligase"/>
</dbReference>
<dbReference type="InterPro" id="IPR001357">
    <property type="entry name" value="BRCT_dom"/>
</dbReference>
<dbReference type="InterPro" id="IPR036420">
    <property type="entry name" value="BRCT_dom_sf"/>
</dbReference>
<dbReference type="InterPro" id="IPR000977">
    <property type="entry name" value="DNA_ligase_ATP-dep"/>
</dbReference>
<dbReference type="InterPro" id="IPR012309">
    <property type="entry name" value="DNA_ligase_ATP-dep_C"/>
</dbReference>
<dbReference type="InterPro" id="IPR012310">
    <property type="entry name" value="DNA_ligase_ATP-dep_cent"/>
</dbReference>
<dbReference type="InterPro" id="IPR016059">
    <property type="entry name" value="DNA_ligase_ATP-dep_CS"/>
</dbReference>
<dbReference type="InterPro" id="IPR012308">
    <property type="entry name" value="DNA_ligase_ATP-dep_N"/>
</dbReference>
<dbReference type="InterPro" id="IPR036599">
    <property type="entry name" value="DNA_ligase_N_sf"/>
</dbReference>
<dbReference type="InterPro" id="IPR031916">
    <property type="entry name" value="LIG3_BRCT"/>
</dbReference>
<dbReference type="InterPro" id="IPR043472">
    <property type="entry name" value="Macro_dom-like"/>
</dbReference>
<dbReference type="InterPro" id="IPR012340">
    <property type="entry name" value="NA-bd_OB-fold"/>
</dbReference>
<dbReference type="NCBIfam" id="TIGR00574">
    <property type="entry name" value="dnl1"/>
    <property type="match status" value="1"/>
</dbReference>
<dbReference type="PANTHER" id="PTHR45674">
    <property type="entry name" value="DNA LIGASE 1/3 FAMILY MEMBER"/>
    <property type="match status" value="1"/>
</dbReference>
<dbReference type="PANTHER" id="PTHR45674:SF9">
    <property type="entry name" value="DNA LIGASE 3"/>
    <property type="match status" value="1"/>
</dbReference>
<dbReference type="Pfam" id="PF00533">
    <property type="entry name" value="BRCT"/>
    <property type="match status" value="1"/>
</dbReference>
<dbReference type="Pfam" id="PF04679">
    <property type="entry name" value="DNA_ligase_A_C"/>
    <property type="match status" value="1"/>
</dbReference>
<dbReference type="Pfam" id="PF01068">
    <property type="entry name" value="DNA_ligase_A_M"/>
    <property type="match status" value="1"/>
</dbReference>
<dbReference type="Pfam" id="PF04675">
    <property type="entry name" value="DNA_ligase_A_N"/>
    <property type="match status" value="1"/>
</dbReference>
<dbReference type="Pfam" id="PF16759">
    <property type="entry name" value="LIG3_BRCT"/>
    <property type="match status" value="1"/>
</dbReference>
<dbReference type="SMART" id="SM00292">
    <property type="entry name" value="BRCT"/>
    <property type="match status" value="2"/>
</dbReference>
<dbReference type="SUPFAM" id="SSF117018">
    <property type="entry name" value="ATP-dependent DNA ligase DNA-binding domain"/>
    <property type="match status" value="1"/>
</dbReference>
<dbReference type="SUPFAM" id="SSF52113">
    <property type="entry name" value="BRCT domain"/>
    <property type="match status" value="2"/>
</dbReference>
<dbReference type="SUPFAM" id="SSF56091">
    <property type="entry name" value="DNA ligase/mRNA capping enzyme, catalytic domain"/>
    <property type="match status" value="1"/>
</dbReference>
<dbReference type="SUPFAM" id="SSF52949">
    <property type="entry name" value="Macro domain-like"/>
    <property type="match status" value="1"/>
</dbReference>
<dbReference type="SUPFAM" id="SSF50249">
    <property type="entry name" value="Nucleic acid-binding proteins"/>
    <property type="match status" value="1"/>
</dbReference>
<dbReference type="PROSITE" id="PS50172">
    <property type="entry name" value="BRCT"/>
    <property type="match status" value="2"/>
</dbReference>
<dbReference type="PROSITE" id="PS00697">
    <property type="entry name" value="DNA_LIGASE_A1"/>
    <property type="match status" value="1"/>
</dbReference>
<dbReference type="PROSITE" id="PS00333">
    <property type="entry name" value="DNA_LIGASE_A2"/>
    <property type="match status" value="1"/>
</dbReference>
<dbReference type="PROSITE" id="PS50160">
    <property type="entry name" value="DNA_LIGASE_A3"/>
    <property type="match status" value="1"/>
</dbReference>
<comment type="function">
    <text>The alpha isoform interacts with DNA-repair protein XRCC1 and can correct defective DNA strand-break repair and sister chromatid exchange following treatment with ionizing radiation and alkylating agents. The beta isoform does not interact with XRCC1 and may be specifically involved in the completion of homologous recombination events that occur during meiotic prophase.</text>
</comment>
<comment type="catalytic activity">
    <reaction evidence="4">
        <text>ATP + (deoxyribonucleotide)n-3'-hydroxyl + 5'-phospho-(deoxyribonucleotide)m = (deoxyribonucleotide)n+m + AMP + diphosphate.</text>
        <dbReference type="EC" id="6.5.1.1"/>
    </reaction>
</comment>
<comment type="cofactor">
    <cofactor evidence="1">
        <name>Mg(2+)</name>
        <dbReference type="ChEBI" id="CHEBI:18420"/>
    </cofactor>
</comment>
<comment type="subcellular location">
    <subcellularLocation>
        <location evidence="1">Nucleus</location>
    </subcellularLocation>
</comment>
<comment type="similarity">
    <text evidence="6">Belongs to the ATP-dependent DNA ligase family.</text>
</comment>
<organism>
    <name type="scientific">Dictyostelium discoideum</name>
    <name type="common">Social amoeba</name>
    <dbReference type="NCBI Taxonomy" id="44689"/>
    <lineage>
        <taxon>Eukaryota</taxon>
        <taxon>Amoebozoa</taxon>
        <taxon>Evosea</taxon>
        <taxon>Eumycetozoa</taxon>
        <taxon>Dictyostelia</taxon>
        <taxon>Dictyosteliales</taxon>
        <taxon>Dictyosteliaceae</taxon>
        <taxon>Dictyostelium</taxon>
    </lineage>
</organism>
<reference key="1">
    <citation type="journal article" date="2005" name="Nature">
        <title>The genome of the social amoeba Dictyostelium discoideum.</title>
        <authorList>
            <person name="Eichinger L."/>
            <person name="Pachebat J.A."/>
            <person name="Gloeckner G."/>
            <person name="Rajandream M.A."/>
            <person name="Sucgang R."/>
            <person name="Berriman M."/>
            <person name="Song J."/>
            <person name="Olsen R."/>
            <person name="Szafranski K."/>
            <person name="Xu Q."/>
            <person name="Tunggal B."/>
            <person name="Kummerfeld S."/>
            <person name="Madera M."/>
            <person name="Konfortov B.A."/>
            <person name="Rivero F."/>
            <person name="Bankier A.T."/>
            <person name="Lehmann R."/>
            <person name="Hamlin N."/>
            <person name="Davies R."/>
            <person name="Gaudet P."/>
            <person name="Fey P."/>
            <person name="Pilcher K."/>
            <person name="Chen G."/>
            <person name="Saunders D."/>
            <person name="Sodergren E.J."/>
            <person name="Davis P."/>
            <person name="Kerhornou A."/>
            <person name="Nie X."/>
            <person name="Hall N."/>
            <person name="Anjard C."/>
            <person name="Hemphill L."/>
            <person name="Bason N."/>
            <person name="Farbrother P."/>
            <person name="Desany B."/>
            <person name="Just E."/>
            <person name="Morio T."/>
            <person name="Rost R."/>
            <person name="Churcher C.M."/>
            <person name="Cooper J."/>
            <person name="Haydock S."/>
            <person name="van Driessche N."/>
            <person name="Cronin A."/>
            <person name="Goodhead I."/>
            <person name="Muzny D.M."/>
            <person name="Mourier T."/>
            <person name="Pain A."/>
            <person name="Lu M."/>
            <person name="Harper D."/>
            <person name="Lindsay R."/>
            <person name="Hauser H."/>
            <person name="James K.D."/>
            <person name="Quiles M."/>
            <person name="Madan Babu M."/>
            <person name="Saito T."/>
            <person name="Buchrieser C."/>
            <person name="Wardroper A."/>
            <person name="Felder M."/>
            <person name="Thangavelu M."/>
            <person name="Johnson D."/>
            <person name="Knights A."/>
            <person name="Loulseged H."/>
            <person name="Mungall K.L."/>
            <person name="Oliver K."/>
            <person name="Price C."/>
            <person name="Quail M.A."/>
            <person name="Urushihara H."/>
            <person name="Hernandez J."/>
            <person name="Rabbinowitsch E."/>
            <person name="Steffen D."/>
            <person name="Sanders M."/>
            <person name="Ma J."/>
            <person name="Kohara Y."/>
            <person name="Sharp S."/>
            <person name="Simmonds M.N."/>
            <person name="Spiegler S."/>
            <person name="Tivey A."/>
            <person name="Sugano S."/>
            <person name="White B."/>
            <person name="Walker D."/>
            <person name="Woodward J.R."/>
            <person name="Winckler T."/>
            <person name="Tanaka Y."/>
            <person name="Shaulsky G."/>
            <person name="Schleicher M."/>
            <person name="Weinstock G.M."/>
            <person name="Rosenthal A."/>
            <person name="Cox E.C."/>
            <person name="Chisholm R.L."/>
            <person name="Gibbs R.A."/>
            <person name="Loomis W.F."/>
            <person name="Platzer M."/>
            <person name="Kay R.R."/>
            <person name="Williams J.G."/>
            <person name="Dear P.H."/>
            <person name="Noegel A.A."/>
            <person name="Barrell B.G."/>
            <person name="Kuspa A."/>
        </authorList>
    </citation>
    <scope>NUCLEOTIDE SEQUENCE [LARGE SCALE GENOMIC DNA]</scope>
    <source>
        <strain>AX4</strain>
    </source>
</reference>